<sequence>APSSGFFGTR</sequence>
<proteinExistence type="evidence at protein level"/>
<accession>P86584</accession>
<keyword id="KW-0027">Amidation</keyword>
<keyword id="KW-0903">Direct protein sequencing</keyword>
<keyword id="KW-0527">Neuropeptide</keyword>
<keyword id="KW-0964">Secreted</keyword>
<comment type="subcellular location">
    <subcellularLocation>
        <location evidence="1 3">Secreted</location>
    </subcellularLocation>
</comment>
<comment type="tissue specificity">
    <text evidence="1">Expressed in the antennal lobe (at protein level).</text>
</comment>
<feature type="peptide" id="PRO_0000395652" description="Tachykinin-related peptide 3" evidence="1">
    <location>
        <begin position="1"/>
        <end position="10"/>
    </location>
</feature>
<feature type="modified residue" description="Arginine amide" evidence="1">
    <location>
        <position position="10"/>
    </location>
</feature>
<name>TRP3_ONCFA</name>
<evidence type="ECO:0000269" key="1">
    <source>
    </source>
</evidence>
<evidence type="ECO:0000303" key="2">
    <source>
    </source>
</evidence>
<evidence type="ECO:0000305" key="3"/>
<organism>
    <name type="scientific">Oncopeltus fasciatus</name>
    <name type="common">Large milkweed bug</name>
    <dbReference type="NCBI Taxonomy" id="7536"/>
    <lineage>
        <taxon>Eukaryota</taxon>
        <taxon>Metazoa</taxon>
        <taxon>Ecdysozoa</taxon>
        <taxon>Arthropoda</taxon>
        <taxon>Hexapoda</taxon>
        <taxon>Insecta</taxon>
        <taxon>Pterygota</taxon>
        <taxon>Neoptera</taxon>
        <taxon>Paraneoptera</taxon>
        <taxon>Hemiptera</taxon>
        <taxon>Heteroptera</taxon>
        <taxon>Panheteroptera</taxon>
        <taxon>Pentatomomorpha</taxon>
        <taxon>Lygaeoidea</taxon>
        <taxon>Lygaeidae</taxon>
        <taxon>Lygaeinae</taxon>
        <taxon>Oncopeltus</taxon>
    </lineage>
</organism>
<dbReference type="GO" id="GO:0005576">
    <property type="term" value="C:extracellular region"/>
    <property type="evidence" value="ECO:0007005"/>
    <property type="project" value="UniProtKB"/>
</dbReference>
<dbReference type="GO" id="GO:0007218">
    <property type="term" value="P:neuropeptide signaling pathway"/>
    <property type="evidence" value="ECO:0007669"/>
    <property type="project" value="UniProtKB-KW"/>
</dbReference>
<reference evidence="3" key="1">
    <citation type="journal article" date="2009" name="Peptides">
        <title>Neuropeptides in Heteroptera: identification of allatotropin-related peptide and tachykinin-related peptides using MALDI-TOF mass spectrometry.</title>
        <authorList>
            <person name="Neupert S."/>
            <person name="Russell W.K."/>
            <person name="Russell D.H."/>
            <person name="Lopez J.D. Jr."/>
            <person name="Predel R."/>
            <person name="Nachman R.J."/>
        </authorList>
    </citation>
    <scope>PROTEIN SEQUENCE</scope>
    <scope>SUBCELLULAR LOCATION</scope>
    <scope>TISSUE SPECIFICITY</scope>
    <scope>AMIDATION AT ARG-10</scope>
    <source>
        <tissue evidence="1">Antennal lobe</tissue>
    </source>
</reference>
<protein>
    <recommendedName>
        <fullName evidence="2">Tachykinin-related peptide 3</fullName>
        <shortName evidence="2">TKRP-3</shortName>
    </recommendedName>
</protein>